<reference key="1">
    <citation type="journal article" date="1993" name="Biochim. Biophys. Acta">
        <title>Two open reading frames adjacent to the Escherichia coli K-12 transketolase (tkt) gene show high similarity to the mannitol phosphotransferase system enzymes from Escherichia coli and various Gram-positive bacteria.</title>
        <authorList>
            <person name="Sprenger G.A."/>
        </authorList>
    </citation>
    <scope>NUCLEOTIDE SEQUENCE [GENOMIC DNA] OF 1-446</scope>
    <source>
        <strain>K12</strain>
    </source>
</reference>
<reference key="2">
    <citation type="unpublished observations" date="1993-06">
        <authorList>
            <person name="Rudd K.E."/>
        </authorList>
    </citation>
    <scope>PRESENCE OF VECTOR SEQUENCE CONTAMINATION IN SEQUENCE DESCRIBED IN PUBMED:8353127</scope>
</reference>
<reference key="3">
    <citation type="journal article" date="1997" name="Science">
        <title>The complete genome sequence of Escherichia coli K-12.</title>
        <authorList>
            <person name="Blattner F.R."/>
            <person name="Plunkett G. III"/>
            <person name="Bloch C.A."/>
            <person name="Perna N.T."/>
            <person name="Burland V."/>
            <person name="Riley M."/>
            <person name="Collado-Vides J."/>
            <person name="Glasner J.D."/>
            <person name="Rode C.K."/>
            <person name="Mayhew G.F."/>
            <person name="Gregor J."/>
            <person name="Davis N.W."/>
            <person name="Kirkpatrick H.A."/>
            <person name="Goeden M.A."/>
            <person name="Rose D.J."/>
            <person name="Mau B."/>
            <person name="Shao Y."/>
        </authorList>
    </citation>
    <scope>NUCLEOTIDE SEQUENCE [LARGE SCALE GENOMIC DNA]</scope>
    <source>
        <strain>K12 / MG1655 / ATCC 47076</strain>
    </source>
</reference>
<reference key="4">
    <citation type="journal article" date="2006" name="Mol. Syst. Biol.">
        <title>Highly accurate genome sequences of Escherichia coli K-12 strains MG1655 and W3110.</title>
        <authorList>
            <person name="Hayashi K."/>
            <person name="Morooka N."/>
            <person name="Yamamoto Y."/>
            <person name="Fujita K."/>
            <person name="Isono K."/>
            <person name="Choi S."/>
            <person name="Ohtsubo E."/>
            <person name="Baba T."/>
            <person name="Wanner B.L."/>
            <person name="Mori H."/>
            <person name="Horiuchi T."/>
        </authorList>
    </citation>
    <scope>NUCLEOTIDE SEQUENCE [LARGE SCALE GENOMIC DNA]</scope>
    <source>
        <strain>K12 / W3110 / ATCC 27325 / DSM 5911</strain>
    </source>
</reference>
<reference key="5">
    <citation type="journal article" date="2005" name="Science">
        <title>Global topology analysis of the Escherichia coli inner membrane proteome.</title>
        <authorList>
            <person name="Daley D.O."/>
            <person name="Rapp M."/>
            <person name="Granseth E."/>
            <person name="Melen K."/>
            <person name="Drew D."/>
            <person name="von Heijne G."/>
        </authorList>
    </citation>
    <scope>SUBCELLULAR LOCATION</scope>
    <source>
        <strain>K12 / MG1655 / ATCC 47076</strain>
    </source>
</reference>
<comment type="function">
    <text evidence="2">The phosphoenolpyruvate-dependent sugar phosphotransferase system (sugar PTS), a major carbohydrate active transport system, catalyzes the phosphorylation of incoming sugar substrates concomitantly with their translocation across the cell membrane. The enzyme II CmtAB PTS system is involved in D-mannitol transport.</text>
</comment>
<comment type="catalytic activity">
    <reaction evidence="1">
        <text>D-mannitol(out) + N(pros)-phospho-L-histidyl-[protein] = D-mannitol 1-phosphate(in) + L-histidyl-[protein]</text>
        <dbReference type="Rhea" id="RHEA:33363"/>
        <dbReference type="Rhea" id="RHEA-COMP:9745"/>
        <dbReference type="Rhea" id="RHEA-COMP:9746"/>
        <dbReference type="ChEBI" id="CHEBI:16899"/>
        <dbReference type="ChEBI" id="CHEBI:29979"/>
        <dbReference type="ChEBI" id="CHEBI:61381"/>
        <dbReference type="ChEBI" id="CHEBI:64837"/>
        <dbReference type="EC" id="2.7.1.197"/>
    </reaction>
</comment>
<comment type="subcellular location">
    <subcellularLocation>
        <location evidence="4 5">Cell inner membrane</location>
        <topology evidence="4 5">Multi-pass membrane protein</topology>
    </subcellularLocation>
</comment>
<comment type="domain">
    <text evidence="4">The EIIC type-2 domain forms the PTS system translocation channel and contains the specific substrate-binding site.</text>
</comment>
<comment type="domain">
    <text evidence="3">The PTS EIIB type-2 domain is phosphorylated by phospho-EIIA on a cysteinyl residue. Then, it transfers the phosphoryl group to the sugar substrate concomitantly with the sugar uptake processed by the PTS EIIC type-2 domain.</text>
</comment>
<comment type="sequence caution" evidence="7">
    <conflict type="miscellaneous discrepancy">
        <sequence resource="EMBL-CDS" id="CAA51229"/>
    </conflict>
    <text>Contaminating sequence. Vector contamination at the C-terminus.</text>
</comment>
<keyword id="KW-0997">Cell inner membrane</keyword>
<keyword id="KW-1003">Cell membrane</keyword>
<keyword id="KW-0418">Kinase</keyword>
<keyword id="KW-0472">Membrane</keyword>
<keyword id="KW-0597">Phosphoprotein</keyword>
<keyword id="KW-0598">Phosphotransferase system</keyword>
<keyword id="KW-1185">Reference proteome</keyword>
<keyword id="KW-0762">Sugar transport</keyword>
<keyword id="KW-0808">Transferase</keyword>
<keyword id="KW-0812">Transmembrane</keyword>
<keyword id="KW-1133">Transmembrane helix</keyword>
<keyword id="KW-0813">Transport</keyword>
<gene>
    <name evidence="6" type="primary">cmtA</name>
    <name type="ordered locus">b2933</name>
    <name type="ordered locus">JW2900</name>
</gene>
<evidence type="ECO:0000250" key="1">
    <source>
        <dbReference type="UniProtKB" id="P00550"/>
    </source>
</evidence>
<evidence type="ECO:0000250" key="2">
    <source>
        <dbReference type="UniProtKB" id="P28008"/>
    </source>
</evidence>
<evidence type="ECO:0000255" key="3">
    <source>
        <dbReference type="PROSITE-ProRule" id="PRU00422"/>
    </source>
</evidence>
<evidence type="ECO:0000255" key="4">
    <source>
        <dbReference type="PROSITE-ProRule" id="PRU00427"/>
    </source>
</evidence>
<evidence type="ECO:0000269" key="5">
    <source>
    </source>
</evidence>
<evidence type="ECO:0000303" key="6">
    <source>
    </source>
</evidence>
<evidence type="ECO:0000305" key="7"/>
<dbReference type="EC" id="2.7.1.197" evidence="1 2"/>
<dbReference type="EMBL" id="X72677">
    <property type="protein sequence ID" value="CAA51229.1"/>
    <property type="status" value="ALT_TERM"/>
    <property type="molecule type" value="Genomic_DNA"/>
</dbReference>
<dbReference type="EMBL" id="U28377">
    <property type="protein sequence ID" value="AAA69100.1"/>
    <property type="molecule type" value="Genomic_DNA"/>
</dbReference>
<dbReference type="EMBL" id="U00096">
    <property type="protein sequence ID" value="AAC75970.1"/>
    <property type="molecule type" value="Genomic_DNA"/>
</dbReference>
<dbReference type="EMBL" id="AP009048">
    <property type="protein sequence ID" value="BAE76996.1"/>
    <property type="molecule type" value="Genomic_DNA"/>
</dbReference>
<dbReference type="PIR" id="D65078">
    <property type="entry name" value="S36123"/>
</dbReference>
<dbReference type="RefSeq" id="NP_417408.1">
    <property type="nucleotide sequence ID" value="NC_000913.3"/>
</dbReference>
<dbReference type="RefSeq" id="WP_000428805.1">
    <property type="nucleotide sequence ID" value="NZ_LN832404.1"/>
</dbReference>
<dbReference type="SMR" id="P69826"/>
<dbReference type="BioGRID" id="4262068">
    <property type="interactions" value="79"/>
</dbReference>
<dbReference type="FunCoup" id="P69826">
    <property type="interactions" value="294"/>
</dbReference>
<dbReference type="IntAct" id="P69826">
    <property type="interactions" value="3"/>
</dbReference>
<dbReference type="STRING" id="511145.b2933"/>
<dbReference type="TCDB" id="4.A.2.1.24">
    <property type="family name" value="the pts fructose-mannitol (fru) family"/>
</dbReference>
<dbReference type="PaxDb" id="511145-b2933"/>
<dbReference type="EnsemblBacteria" id="AAC75970">
    <property type="protein sequence ID" value="AAC75970"/>
    <property type="gene ID" value="b2933"/>
</dbReference>
<dbReference type="GeneID" id="75173039"/>
<dbReference type="GeneID" id="945256"/>
<dbReference type="KEGG" id="ecj:JW2900"/>
<dbReference type="KEGG" id="eco:b2933"/>
<dbReference type="KEGG" id="ecoc:C3026_16060"/>
<dbReference type="PATRIC" id="fig|1411691.4.peg.3800"/>
<dbReference type="EchoBASE" id="EB1740"/>
<dbReference type="eggNOG" id="COG2213">
    <property type="taxonomic scope" value="Bacteria"/>
</dbReference>
<dbReference type="HOGENOM" id="CLU_028721_2_0_6"/>
<dbReference type="InParanoid" id="P69826"/>
<dbReference type="OMA" id="PAAMIIH"/>
<dbReference type="OrthoDB" id="9814222at2"/>
<dbReference type="PhylomeDB" id="P69826"/>
<dbReference type="BioCyc" id="EcoCyc:CMTA-MONOMER"/>
<dbReference type="BioCyc" id="MetaCyc:CMTA-MONOMER"/>
<dbReference type="PRO" id="PR:P69826"/>
<dbReference type="Proteomes" id="UP000000625">
    <property type="component" value="Chromosome"/>
</dbReference>
<dbReference type="GO" id="GO:0005886">
    <property type="term" value="C:plasma membrane"/>
    <property type="evidence" value="ECO:0000314"/>
    <property type="project" value="EcoCyc"/>
</dbReference>
<dbReference type="GO" id="GO:0016301">
    <property type="term" value="F:kinase activity"/>
    <property type="evidence" value="ECO:0007669"/>
    <property type="project" value="UniProtKB-KW"/>
</dbReference>
<dbReference type="GO" id="GO:0022872">
    <property type="term" value="F:protein-N(PI)-phosphohistidine-mannitol phosphotransferase system transmembrane transporter activity"/>
    <property type="evidence" value="ECO:0007669"/>
    <property type="project" value="InterPro"/>
</dbReference>
<dbReference type="GO" id="GO:0009401">
    <property type="term" value="P:phosphoenolpyruvate-dependent sugar phosphotransferase system"/>
    <property type="evidence" value="ECO:0000247"/>
    <property type="project" value="EcoCyc"/>
</dbReference>
<dbReference type="CDD" id="cd05567">
    <property type="entry name" value="PTS_IIB_mannitol"/>
    <property type="match status" value="1"/>
</dbReference>
<dbReference type="FunFam" id="3.40.50.2300:FF:000047">
    <property type="entry name" value="PTS system mannitol-specific transporter subunit IICBA"/>
    <property type="match status" value="1"/>
</dbReference>
<dbReference type="Gene3D" id="3.40.50.2300">
    <property type="match status" value="1"/>
</dbReference>
<dbReference type="InterPro" id="IPR036095">
    <property type="entry name" value="PTS_EIIB-like_sf"/>
</dbReference>
<dbReference type="InterPro" id="IPR013011">
    <property type="entry name" value="PTS_EIIB_2"/>
</dbReference>
<dbReference type="InterPro" id="IPR003501">
    <property type="entry name" value="PTS_EIIB_2/3"/>
</dbReference>
<dbReference type="InterPro" id="IPR029503">
    <property type="entry name" value="PTS_EIIB_mannitol"/>
</dbReference>
<dbReference type="InterPro" id="IPR003352">
    <property type="entry name" value="PTS_EIIC"/>
</dbReference>
<dbReference type="InterPro" id="IPR013014">
    <property type="entry name" value="PTS_EIIC_2"/>
</dbReference>
<dbReference type="InterPro" id="IPR004718">
    <property type="entry name" value="PTS_IIC_mtl"/>
</dbReference>
<dbReference type="InterPro" id="IPR050893">
    <property type="entry name" value="Sugar_PTS"/>
</dbReference>
<dbReference type="NCBIfam" id="TIGR00851">
    <property type="entry name" value="mtlA"/>
    <property type="match status" value="1"/>
</dbReference>
<dbReference type="NCBIfam" id="NF011663">
    <property type="entry name" value="PRK15083.1"/>
    <property type="match status" value="1"/>
</dbReference>
<dbReference type="PANTHER" id="PTHR30181">
    <property type="entry name" value="MANNITOL PERMEASE IIC COMPONENT"/>
    <property type="match status" value="1"/>
</dbReference>
<dbReference type="PANTHER" id="PTHR30181:SF2">
    <property type="entry name" value="PTS SYSTEM MANNITOL-SPECIFIC EIICBA COMPONENT"/>
    <property type="match status" value="1"/>
</dbReference>
<dbReference type="Pfam" id="PF02378">
    <property type="entry name" value="PTS_EIIC"/>
    <property type="match status" value="1"/>
</dbReference>
<dbReference type="Pfam" id="PF02302">
    <property type="entry name" value="PTS_IIB"/>
    <property type="match status" value="1"/>
</dbReference>
<dbReference type="SUPFAM" id="SSF52794">
    <property type="entry name" value="PTS system IIB component-like"/>
    <property type="match status" value="1"/>
</dbReference>
<dbReference type="PROSITE" id="PS51099">
    <property type="entry name" value="PTS_EIIB_TYPE_2"/>
    <property type="match status" value="1"/>
</dbReference>
<dbReference type="PROSITE" id="PS51104">
    <property type="entry name" value="PTS_EIIC_TYPE_2"/>
    <property type="match status" value="1"/>
</dbReference>
<proteinExistence type="inferred from homology"/>
<name>PTMCB_ECOLI</name>
<organism>
    <name type="scientific">Escherichia coli (strain K12)</name>
    <dbReference type="NCBI Taxonomy" id="83333"/>
    <lineage>
        <taxon>Bacteria</taxon>
        <taxon>Pseudomonadati</taxon>
        <taxon>Pseudomonadota</taxon>
        <taxon>Gammaproteobacteria</taxon>
        <taxon>Enterobacterales</taxon>
        <taxon>Enterobacteriaceae</taxon>
        <taxon>Escherichia</taxon>
    </lineage>
</organism>
<accession>P69826</accession>
<accession>P32059</accession>
<accession>Q2M9R0</accession>
<protein>
    <recommendedName>
        <fullName evidence="6">PTS system mannitol-specific cryptic EIICB component</fullName>
    </recommendedName>
    <alternativeName>
        <fullName evidence="2">EIICB-Mtl</fullName>
        <shortName evidence="2">EII-Mtl</shortName>
    </alternativeName>
    <domain>
        <recommendedName>
            <fullName evidence="2">Mannitol permease IIC component</fullName>
        </recommendedName>
        <alternativeName>
            <fullName evidence="2">PTS system mannitol-specific EIIC component</fullName>
        </alternativeName>
    </domain>
    <domain>
        <recommendedName>
            <fullName evidence="2">Mannitol-specific phosphotransferase enzyme IIB component</fullName>
            <ecNumber evidence="1 2">2.7.1.197</ecNumber>
        </recommendedName>
        <alternativeName>
            <fullName evidence="2">PTS system mannitol-specific EIIB component</fullName>
        </alternativeName>
    </domain>
</protein>
<sequence>MENKSARAKVQAFGGFLTAMVIPNIGAFIAWGFITALFIPTGWLPNEHFAKIVGPMITYLLPVMIGSTGGHLVGGKRGAVMGGIGTIGVIVGAEIPMFLGSMIMGPLGGLVIKYVDKALEKRIPAGFEMVINNFSLGIAGMLLCLLGFEVIGPAVLIANTFVKECIEALVHAGYLPLLSVINEPAKVLFLNNAIDQGVYYPLGMQQASVNGKSIFFMVASNPGPGLGLLLAFTLFGKGMSKRSAPGAMIIHFLGGIHELYFPYVLMKPLTIIAMIAGGMSGTWMFNLLDGGLVAGPSPGSIFAYLALTPKGSFLATIAGVTVGTLVSFAITSLILKMEKTVETESEDEFAQSANAVKAMKQEGAFSLSRVKRIAFVCDAGMGSSAMGATTFRKRLEKAGLAIEVKHYAIENVPADADIVVTHASLEGRVKRVTDKPLILINNYIGDPKLDTLFNQLTAEHKH</sequence>
<feature type="chain" id="PRO_0000186679" description="PTS system mannitol-specific cryptic EIICB component">
    <location>
        <begin position="1"/>
        <end position="462"/>
    </location>
</feature>
<feature type="topological domain" description="Cytoplasmic" evidence="1">
    <location>
        <begin position="1"/>
        <end position="24"/>
    </location>
</feature>
<feature type="transmembrane region" description="Helical" evidence="1">
    <location>
        <begin position="25"/>
        <end position="46"/>
    </location>
</feature>
<feature type="topological domain" description="Periplasmic" evidence="1">
    <location>
        <begin position="47"/>
        <end position="50"/>
    </location>
</feature>
<feature type="transmembrane region" description="Helical" evidence="1">
    <location>
        <begin position="51"/>
        <end position="71"/>
    </location>
</feature>
<feature type="topological domain" description="Cytoplasmic" evidence="1">
    <location>
        <begin position="72"/>
        <end position="134"/>
    </location>
</feature>
<feature type="transmembrane region" description="Helical" evidence="1">
    <location>
        <begin position="135"/>
        <end position="156"/>
    </location>
</feature>
<feature type="topological domain" description="Periplasmic" evidence="1">
    <location>
        <begin position="157"/>
        <end position="165"/>
    </location>
</feature>
<feature type="transmembrane region" description="Helical" evidence="1">
    <location>
        <begin position="166"/>
        <end position="186"/>
    </location>
</feature>
<feature type="topological domain" description="Cytoplasmic" evidence="1">
    <location>
        <begin position="187"/>
        <end position="273"/>
    </location>
</feature>
<feature type="transmembrane region" description="Helical" evidence="1">
    <location>
        <begin position="274"/>
        <end position="293"/>
    </location>
</feature>
<feature type="topological domain" description="Periplasmic" evidence="1">
    <location>
        <begin position="294"/>
        <end position="313"/>
    </location>
</feature>
<feature type="transmembrane region" description="Helical" evidence="1">
    <location>
        <begin position="314"/>
        <end position="335"/>
    </location>
</feature>
<feature type="topological domain" description="Cytoplasmic" evidence="1">
    <location>
        <begin position="336"/>
        <end position="462"/>
    </location>
</feature>
<feature type="domain" description="PTS EIIC type-2" evidence="4">
    <location>
        <begin position="13"/>
        <end position="344"/>
    </location>
</feature>
<feature type="domain" description="PTS EIIB type-2" evidence="3">
    <location>
        <begin position="371"/>
        <end position="461"/>
    </location>
</feature>
<feature type="active site" description="Phosphocysteine intermediate; for EIIB activity" evidence="1 2">
    <location>
        <position position="377"/>
    </location>
</feature>
<feature type="modified residue" description="Phosphocysteine; by EIIA" evidence="1 2 3">
    <location>
        <position position="377"/>
    </location>
</feature>
<feature type="sequence conflict" description="In Ref. 1; CAA51229." evidence="7" ref="1">
    <original>MI</original>
    <variation>IEF</variation>
    <location>
        <begin position="274"/>
        <end position="275"/>
    </location>
</feature>
<feature type="sequence conflict" description="In Ref. 1; CAA51229." evidence="7" ref="1">
    <original>DADIVVTHASLEGRVKRVTDK</original>
    <variation>GCRISGRLHPWPRSWKGAVETGVRN</variation>
    <location>
        <begin position="415"/>
        <end position="435"/>
    </location>
</feature>